<dbReference type="EMBL" id="CR954253">
    <property type="protein sequence ID" value="CAI98309.1"/>
    <property type="molecule type" value="Genomic_DNA"/>
</dbReference>
<dbReference type="RefSeq" id="WP_002879222.1">
    <property type="nucleotide sequence ID" value="NZ_JQAV01000014.1"/>
</dbReference>
<dbReference type="SMR" id="Q1G9A5"/>
<dbReference type="STRING" id="390333.Ldb1509"/>
<dbReference type="GeneID" id="69669312"/>
<dbReference type="KEGG" id="ldb:Ldb1509"/>
<dbReference type="PATRIC" id="fig|390333.13.peg.727"/>
<dbReference type="eggNOG" id="COG1327">
    <property type="taxonomic scope" value="Bacteria"/>
</dbReference>
<dbReference type="HOGENOM" id="CLU_108412_0_0_9"/>
<dbReference type="BioCyc" id="LDEL390333:LDB_RS06510-MONOMER"/>
<dbReference type="Proteomes" id="UP000001259">
    <property type="component" value="Chromosome"/>
</dbReference>
<dbReference type="GO" id="GO:0005524">
    <property type="term" value="F:ATP binding"/>
    <property type="evidence" value="ECO:0007669"/>
    <property type="project" value="UniProtKB-KW"/>
</dbReference>
<dbReference type="GO" id="GO:0003677">
    <property type="term" value="F:DNA binding"/>
    <property type="evidence" value="ECO:0007669"/>
    <property type="project" value="UniProtKB-KW"/>
</dbReference>
<dbReference type="GO" id="GO:0008270">
    <property type="term" value="F:zinc ion binding"/>
    <property type="evidence" value="ECO:0007669"/>
    <property type="project" value="UniProtKB-UniRule"/>
</dbReference>
<dbReference type="GO" id="GO:0045892">
    <property type="term" value="P:negative regulation of DNA-templated transcription"/>
    <property type="evidence" value="ECO:0007669"/>
    <property type="project" value="UniProtKB-UniRule"/>
</dbReference>
<dbReference type="HAMAP" id="MF_00440">
    <property type="entry name" value="NrdR"/>
    <property type="match status" value="1"/>
</dbReference>
<dbReference type="InterPro" id="IPR005144">
    <property type="entry name" value="ATP-cone_dom"/>
</dbReference>
<dbReference type="InterPro" id="IPR055173">
    <property type="entry name" value="NrdR-like_N"/>
</dbReference>
<dbReference type="InterPro" id="IPR003796">
    <property type="entry name" value="RNR_NrdR-like"/>
</dbReference>
<dbReference type="NCBIfam" id="TIGR00244">
    <property type="entry name" value="transcriptional regulator NrdR"/>
    <property type="match status" value="1"/>
</dbReference>
<dbReference type="PANTHER" id="PTHR30455">
    <property type="entry name" value="TRANSCRIPTIONAL REPRESSOR NRDR"/>
    <property type="match status" value="1"/>
</dbReference>
<dbReference type="PANTHER" id="PTHR30455:SF2">
    <property type="entry name" value="TRANSCRIPTIONAL REPRESSOR NRDR"/>
    <property type="match status" value="1"/>
</dbReference>
<dbReference type="Pfam" id="PF03477">
    <property type="entry name" value="ATP-cone"/>
    <property type="match status" value="1"/>
</dbReference>
<dbReference type="Pfam" id="PF22811">
    <property type="entry name" value="Zn_ribbon_NrdR"/>
    <property type="match status" value="1"/>
</dbReference>
<dbReference type="PROSITE" id="PS51161">
    <property type="entry name" value="ATP_CONE"/>
    <property type="match status" value="1"/>
</dbReference>
<evidence type="ECO:0000255" key="1">
    <source>
        <dbReference type="HAMAP-Rule" id="MF_00440"/>
    </source>
</evidence>
<protein>
    <recommendedName>
        <fullName evidence="1">Transcriptional repressor NrdR</fullName>
    </recommendedName>
</protein>
<keyword id="KW-0067">ATP-binding</keyword>
<keyword id="KW-0238">DNA-binding</keyword>
<keyword id="KW-0479">Metal-binding</keyword>
<keyword id="KW-0547">Nucleotide-binding</keyword>
<keyword id="KW-1185">Reference proteome</keyword>
<keyword id="KW-0678">Repressor</keyword>
<keyword id="KW-0804">Transcription</keyword>
<keyword id="KW-0805">Transcription regulation</keyword>
<keyword id="KW-0862">Zinc</keyword>
<keyword id="KW-0863">Zinc-finger</keyword>
<sequence length="155" mass="17933">MLCPNCHQNASRVIDSRPTDEGRTIRRRRECENCGYRFTTFERVEQSPLLVIKNDGTREAFSREKILNGVAAACQKRPVTSEQLNKLVDNVENRIRAKGVSEIYSKEIGELVMDQLADIDDVAYIRFASIYRQFTDMSSFMKTMEDMMDRHSKAK</sequence>
<organism>
    <name type="scientific">Lactobacillus delbrueckii subsp. bulgaricus (strain ATCC 11842 / DSM 20081 / BCRC 10696 / JCM 1002 / NBRC 13953 / NCIMB 11778 / NCTC 12712 / WDCM 00102 / Lb 14)</name>
    <dbReference type="NCBI Taxonomy" id="390333"/>
    <lineage>
        <taxon>Bacteria</taxon>
        <taxon>Bacillati</taxon>
        <taxon>Bacillota</taxon>
        <taxon>Bacilli</taxon>
        <taxon>Lactobacillales</taxon>
        <taxon>Lactobacillaceae</taxon>
        <taxon>Lactobacillus</taxon>
    </lineage>
</organism>
<name>NRDR_LACDA</name>
<reference key="1">
    <citation type="journal article" date="2006" name="Proc. Natl. Acad. Sci. U.S.A.">
        <title>The complete genome sequence of Lactobacillus bulgaricus reveals extensive and ongoing reductive evolution.</title>
        <authorList>
            <person name="van de Guchte M."/>
            <person name="Penaud S."/>
            <person name="Grimaldi C."/>
            <person name="Barbe V."/>
            <person name="Bryson K."/>
            <person name="Nicolas P."/>
            <person name="Robert C."/>
            <person name="Oztas S."/>
            <person name="Mangenot S."/>
            <person name="Couloux A."/>
            <person name="Loux V."/>
            <person name="Dervyn R."/>
            <person name="Bossy R."/>
            <person name="Bolotin A."/>
            <person name="Batto J.-M."/>
            <person name="Walunas T."/>
            <person name="Gibrat J.-F."/>
            <person name="Bessieres P."/>
            <person name="Weissenbach J."/>
            <person name="Ehrlich S.D."/>
            <person name="Maguin E."/>
        </authorList>
    </citation>
    <scope>NUCLEOTIDE SEQUENCE [LARGE SCALE GENOMIC DNA]</scope>
    <source>
        <strain>ATCC 11842 / DSM 20081 / BCRC 10696 / JCM 1002 / NBRC 13953 / NCIMB 11778 / NCTC 12712 / WDCM 00102 / Lb 14</strain>
    </source>
</reference>
<gene>
    <name evidence="1" type="primary">nrdR</name>
    <name type="ordered locus">Ldb1509</name>
</gene>
<proteinExistence type="inferred from homology"/>
<comment type="function">
    <text evidence="1">Negatively regulates transcription of bacterial ribonucleotide reductase nrd genes and operons by binding to NrdR-boxes.</text>
</comment>
<comment type="cofactor">
    <cofactor evidence="1">
        <name>Zn(2+)</name>
        <dbReference type="ChEBI" id="CHEBI:29105"/>
    </cofactor>
    <text evidence="1">Binds 1 zinc ion.</text>
</comment>
<comment type="similarity">
    <text evidence="1">Belongs to the NrdR family.</text>
</comment>
<feature type="chain" id="PRO_0000264183" description="Transcriptional repressor NrdR">
    <location>
        <begin position="1"/>
        <end position="155"/>
    </location>
</feature>
<feature type="domain" description="ATP-cone" evidence="1">
    <location>
        <begin position="49"/>
        <end position="139"/>
    </location>
</feature>
<feature type="zinc finger region" evidence="1">
    <location>
        <begin position="3"/>
        <end position="34"/>
    </location>
</feature>
<accession>Q1G9A5</accession>